<feature type="chain" id="PRO_0000462472" description="Parvalbumin beta">
    <location>
        <begin position="1"/>
        <end position="107"/>
    </location>
</feature>
<feature type="domain" description="EF-hand 1" evidence="1">
    <location>
        <begin position="37"/>
        <end position="72"/>
    </location>
</feature>
<feature type="domain" description="EF-hand 2" evidence="1">
    <location>
        <begin position="76"/>
        <end position="107"/>
    </location>
</feature>
<feature type="binding site" evidence="1 3 7">
    <location>
        <position position="50"/>
    </location>
    <ligand>
        <name>Ca(2+)</name>
        <dbReference type="ChEBI" id="CHEBI:29108"/>
        <label>1</label>
    </ligand>
</feature>
<feature type="binding site" evidence="1 3 7">
    <location>
        <position position="52"/>
    </location>
    <ligand>
        <name>Ca(2+)</name>
        <dbReference type="ChEBI" id="CHEBI:29108"/>
        <label>1</label>
    </ligand>
</feature>
<feature type="binding site" evidence="1 3 7">
    <location>
        <position position="54"/>
    </location>
    <ligand>
        <name>Ca(2+)</name>
        <dbReference type="ChEBI" id="CHEBI:29108"/>
        <label>1</label>
    </ligand>
</feature>
<feature type="binding site" evidence="3 7">
    <location>
        <position position="56"/>
    </location>
    <ligand>
        <name>Ca(2+)</name>
        <dbReference type="ChEBI" id="CHEBI:29108"/>
        <label>1</label>
    </ligand>
</feature>
<feature type="binding site" evidence="3 7">
    <location>
        <position position="58"/>
    </location>
    <ligand>
        <name>Ca(2+)</name>
        <dbReference type="ChEBI" id="CHEBI:29108"/>
        <label>1</label>
    </ligand>
</feature>
<feature type="binding site" evidence="1 3 7">
    <location>
        <position position="61"/>
    </location>
    <ligand>
        <name>Ca(2+)</name>
        <dbReference type="ChEBI" id="CHEBI:29108"/>
        <label>1</label>
    </ligand>
</feature>
<feature type="binding site" evidence="1 3 7">
    <location>
        <position position="89"/>
    </location>
    <ligand>
        <name>Ca(2+)</name>
        <dbReference type="ChEBI" id="CHEBI:29108"/>
        <label>2</label>
    </ligand>
</feature>
<feature type="binding site" evidence="1 3 7">
    <location>
        <position position="91"/>
    </location>
    <ligand>
        <name>Ca(2+)</name>
        <dbReference type="ChEBI" id="CHEBI:29108"/>
        <label>2</label>
    </ligand>
</feature>
<feature type="binding site" evidence="1 3 7">
    <location>
        <position position="93"/>
    </location>
    <ligand>
        <name>Ca(2+)</name>
        <dbReference type="ChEBI" id="CHEBI:29108"/>
        <label>2</label>
    </ligand>
</feature>
<feature type="binding site" evidence="1 3 7">
    <location>
        <position position="95"/>
    </location>
    <ligand>
        <name>Ca(2+)</name>
        <dbReference type="ChEBI" id="CHEBI:29108"/>
        <label>2</label>
    </ligand>
</feature>
<feature type="binding site" evidence="1 3 7">
    <location>
        <position position="100"/>
    </location>
    <ligand>
        <name>Ca(2+)</name>
        <dbReference type="ChEBI" id="CHEBI:29108"/>
        <label>2</label>
    </ligand>
</feature>
<feature type="disulfide bond" description="Interchain" evidence="3">
    <location>
        <position position="19"/>
    </location>
</feature>
<reference evidence="6 7" key="1">
    <citation type="journal article" date="2018" name="J. Agric. Food Chem.">
        <title>Purification, Characterization, and Crystal Structure of Parvalbumins, the Major Allergens in Mustelus griseus.</title>
        <authorList>
            <person name="Yang R.Q."/>
            <person name="Chen Y.L."/>
            <person name="Chen F."/>
            <person name="Wang H."/>
            <person name="Zhang Q."/>
            <person name="Liu G.M."/>
            <person name="Jin T."/>
            <person name="Cao M.J."/>
        </authorList>
    </citation>
    <scope>PROTEIN SEQUENCE OF 64-74</scope>
    <scope>X-RAY CRYSTALLOGRAPHY (1.54 ANGSTROMS) IN COMPLEX WITH CA(2+)</scope>
    <scope>BIOPHYSICOCHEMICAL PROPERTIES</scope>
    <scope>SUBUNIT</scope>
    <scope>TISSUE SPECIFICITY</scope>
    <scope>IDENTIFICATION BY MASS SPECTROMETRY</scope>
    <scope>ALLERGEN</scope>
    <scope>DISULFIDE BOND</scope>
    <scope>CIRCULAR DICHROISM ANALYSIS</scope>
    <source>
        <tissue evidence="4">Muscle</tissue>
    </source>
</reference>
<accession>A0A3F2YLV2</accession>
<protein>
    <recommendedName>
        <fullName evidence="5">Parvalbumin beta</fullName>
    </recommendedName>
    <alternativeName>
        <fullName evidence="4">Beta-parvalbumin</fullName>
        <shortName evidence="4">Beta-PV</shortName>
    </alternativeName>
    <alternativeName>
        <fullName evidence="4">Parvalbumin SPV-II</fullName>
    </alternativeName>
</protein>
<comment type="function">
    <text evidence="2 3">In muscle, parvalbumin is thought to be involved in relaxation after contraction (By similarity). It binds two calcium ions (PubMed:29969026).</text>
</comment>
<comment type="biophysicochemical properties">
    <phDependence>
        <text evidence="3">Stable between pH 3-11. Homodimerization increases with increasing pH.</text>
    </phDependence>
    <temperatureDependence>
        <text evidence="3">Thermostable up to 240 min at 100 degrees Celsius. As the heating time increases, homodimers increase while monomers decrease gradually. Melting temperature (Tm) is 79.2 degrees Celsius. Reversable thermal denaturation.</text>
    </temperatureDependence>
</comment>
<comment type="subunit">
    <text evidence="3">Monomer. Homodimer; disulfide-linked.</text>
</comment>
<comment type="tissue specificity">
    <text evidence="3">Expressed in muscle (at protein level).</text>
</comment>
<comment type="allergen">
    <text evidence="3">Causes an allergic reaction in human. Natural protein binds to IgE in all of the 15 fish-allergic hospital patients tested in Xiamen, China. IgE-binding reduces after thermal treatment in a time-dependent manner. IgE-binding decreases after heat treatment at 100 degrees Celsius for 10 min and almost disappears at 60 min. Loss of IgE-binding at lower pH 3, but increased IgE-binding at higher pH 9-11.</text>
</comment>
<comment type="similarity">
    <text evidence="2">Belongs to the parvalbumin family.</text>
</comment>
<organism>
    <name type="scientific">Mustelus griseus</name>
    <name type="common">Spotless smooth-hound</name>
    <dbReference type="NCBI Taxonomy" id="89020"/>
    <lineage>
        <taxon>Eukaryota</taxon>
        <taxon>Metazoa</taxon>
        <taxon>Chordata</taxon>
        <taxon>Craniata</taxon>
        <taxon>Vertebrata</taxon>
        <taxon>Chondrichthyes</taxon>
        <taxon>Elasmobranchii</taxon>
        <taxon>Galeomorphii</taxon>
        <taxon>Galeoidea</taxon>
        <taxon>Carcharhiniformes</taxon>
        <taxon>Triakidae</taxon>
        <taxon>Mustelus</taxon>
    </lineage>
</organism>
<proteinExistence type="evidence at protein level"/>
<dbReference type="PDB" id="5ZH6">
    <property type="method" value="X-ray"/>
    <property type="resolution" value="1.54 A"/>
    <property type="chains" value="A/B=1-107"/>
</dbReference>
<dbReference type="PDBsum" id="5ZH6"/>
<dbReference type="SMR" id="A0A3F2YLV2"/>
<dbReference type="GO" id="GO:0005737">
    <property type="term" value="C:cytoplasm"/>
    <property type="evidence" value="ECO:0007669"/>
    <property type="project" value="TreeGrafter"/>
</dbReference>
<dbReference type="GO" id="GO:0005509">
    <property type="term" value="F:calcium ion binding"/>
    <property type="evidence" value="ECO:0007669"/>
    <property type="project" value="UniProtKB-UniRule"/>
</dbReference>
<dbReference type="CDD" id="cd16255">
    <property type="entry name" value="EFh_parvalbumin_beta"/>
    <property type="match status" value="1"/>
</dbReference>
<dbReference type="FunFam" id="1.10.238.10:FF:000060">
    <property type="entry name" value="Parvalbumin, thymic"/>
    <property type="match status" value="1"/>
</dbReference>
<dbReference type="Gene3D" id="1.10.238.10">
    <property type="entry name" value="EF-hand"/>
    <property type="match status" value="1"/>
</dbReference>
<dbReference type="InterPro" id="IPR011992">
    <property type="entry name" value="EF-hand-dom_pair"/>
</dbReference>
<dbReference type="InterPro" id="IPR018247">
    <property type="entry name" value="EF_Hand_1_Ca_BS"/>
</dbReference>
<dbReference type="InterPro" id="IPR002048">
    <property type="entry name" value="EF_hand_dom"/>
</dbReference>
<dbReference type="InterPro" id="IPR008080">
    <property type="entry name" value="Parvalbumin"/>
</dbReference>
<dbReference type="PANTHER" id="PTHR11653:SF12">
    <property type="entry name" value="PARVALBUMIN"/>
    <property type="match status" value="1"/>
</dbReference>
<dbReference type="PANTHER" id="PTHR11653">
    <property type="entry name" value="PARVALBUMIN ALPHA"/>
    <property type="match status" value="1"/>
</dbReference>
<dbReference type="Pfam" id="PF13499">
    <property type="entry name" value="EF-hand_7"/>
    <property type="match status" value="1"/>
</dbReference>
<dbReference type="PRINTS" id="PR01697">
    <property type="entry name" value="PARVALBUMIN"/>
</dbReference>
<dbReference type="SMART" id="SM00054">
    <property type="entry name" value="EFh"/>
    <property type="match status" value="2"/>
</dbReference>
<dbReference type="SUPFAM" id="SSF47473">
    <property type="entry name" value="EF-hand"/>
    <property type="match status" value="1"/>
</dbReference>
<dbReference type="PROSITE" id="PS00018">
    <property type="entry name" value="EF_HAND_1"/>
    <property type="match status" value="2"/>
</dbReference>
<dbReference type="PROSITE" id="PS50222">
    <property type="entry name" value="EF_HAND_2"/>
    <property type="match status" value="1"/>
</dbReference>
<name>PRVB_MUSGR</name>
<sequence>GSITTVLNATDIAKALAQCAGSFNHKTFFVTSGLTNKSDANLAKVFDILDQDRSGFIEVDELKLFLQNFSATARELDETETNAFLAAGDSDHDGKIGVDEFKAMVKA</sequence>
<keyword id="KW-0002">3D-structure</keyword>
<keyword id="KW-0020">Allergen</keyword>
<keyword id="KW-0106">Calcium</keyword>
<keyword id="KW-0903">Direct protein sequencing</keyword>
<keyword id="KW-1015">Disulfide bond</keyword>
<keyword id="KW-0479">Metal-binding</keyword>
<keyword id="KW-0514">Muscle protein</keyword>
<keyword id="KW-0677">Repeat</keyword>
<evidence type="ECO:0000255" key="1">
    <source>
        <dbReference type="PROSITE-ProRule" id="PRU00448"/>
    </source>
</evidence>
<evidence type="ECO:0000255" key="2">
    <source>
        <dbReference type="RuleBase" id="RU368048"/>
    </source>
</evidence>
<evidence type="ECO:0000269" key="3">
    <source>
    </source>
</evidence>
<evidence type="ECO:0000303" key="4">
    <source>
    </source>
</evidence>
<evidence type="ECO:0000305" key="5"/>
<evidence type="ECO:0000312" key="6">
    <source>
        <dbReference type="PDB" id="5ZH6"/>
    </source>
</evidence>
<evidence type="ECO:0007744" key="7">
    <source>
        <dbReference type="PDB" id="5ZH6"/>
    </source>
</evidence>